<reference key="1">
    <citation type="submission" date="2003-03" db="EMBL/GenBank/DDBJ databases">
        <title>The complete genome sequence of Neisseria gonorrhoeae.</title>
        <authorList>
            <person name="Lewis L.A."/>
            <person name="Gillaspy A.F."/>
            <person name="McLaughlin R.E."/>
            <person name="Gipson M."/>
            <person name="Ducey T.F."/>
            <person name="Ownbey T."/>
            <person name="Hartman K."/>
            <person name="Nydick C."/>
            <person name="Carson M.B."/>
            <person name="Vaughn J."/>
            <person name="Thomson C."/>
            <person name="Song L."/>
            <person name="Lin S."/>
            <person name="Yuan X."/>
            <person name="Najar F."/>
            <person name="Zhan M."/>
            <person name="Ren Q."/>
            <person name="Zhu H."/>
            <person name="Qi S."/>
            <person name="Kenton S.M."/>
            <person name="Lai H."/>
            <person name="White J.D."/>
            <person name="Clifton S."/>
            <person name="Roe B.A."/>
            <person name="Dyer D.W."/>
        </authorList>
    </citation>
    <scope>NUCLEOTIDE SEQUENCE [LARGE SCALE GENOMIC DNA]</scope>
    <source>
        <strain>ATCC 700825 / FA 1090</strain>
    </source>
</reference>
<organism>
    <name type="scientific">Neisseria gonorrhoeae (strain ATCC 700825 / FA 1090)</name>
    <dbReference type="NCBI Taxonomy" id="242231"/>
    <lineage>
        <taxon>Bacteria</taxon>
        <taxon>Pseudomonadati</taxon>
        <taxon>Pseudomonadota</taxon>
        <taxon>Betaproteobacteria</taxon>
        <taxon>Neisseriales</taxon>
        <taxon>Neisseriaceae</taxon>
        <taxon>Neisseria</taxon>
    </lineage>
</organism>
<comment type="catalytic activity">
    <reaction evidence="1">
        <text>D-glucose + ATP = D-glucose 6-phosphate + ADP + H(+)</text>
        <dbReference type="Rhea" id="RHEA:17825"/>
        <dbReference type="ChEBI" id="CHEBI:4167"/>
        <dbReference type="ChEBI" id="CHEBI:15378"/>
        <dbReference type="ChEBI" id="CHEBI:30616"/>
        <dbReference type="ChEBI" id="CHEBI:61548"/>
        <dbReference type="ChEBI" id="CHEBI:456216"/>
        <dbReference type="EC" id="2.7.1.2"/>
    </reaction>
</comment>
<comment type="subcellular location">
    <subcellularLocation>
        <location evidence="1">Cytoplasm</location>
    </subcellularLocation>
</comment>
<comment type="similarity">
    <text evidence="1">Belongs to the bacterial glucokinase family.</text>
</comment>
<keyword id="KW-0067">ATP-binding</keyword>
<keyword id="KW-0963">Cytoplasm</keyword>
<keyword id="KW-0324">Glycolysis</keyword>
<keyword id="KW-0418">Kinase</keyword>
<keyword id="KW-0547">Nucleotide-binding</keyword>
<keyword id="KW-1185">Reference proteome</keyword>
<keyword id="KW-0808">Transferase</keyword>
<dbReference type="EC" id="2.7.1.2" evidence="1"/>
<dbReference type="EMBL" id="AE004969">
    <property type="protein sequence ID" value="AAW89437.1"/>
    <property type="molecule type" value="Genomic_DNA"/>
</dbReference>
<dbReference type="RefSeq" id="WP_010951113.1">
    <property type="nucleotide sequence ID" value="NC_002946.2"/>
</dbReference>
<dbReference type="RefSeq" id="YP_207849.1">
    <property type="nucleotide sequence ID" value="NC_002946.2"/>
</dbReference>
<dbReference type="SMR" id="Q5F8Q0"/>
<dbReference type="STRING" id="242231.NGO_0717"/>
<dbReference type="KEGG" id="ngo:NGO_0717"/>
<dbReference type="PATRIC" id="fig|242231.10.peg.853"/>
<dbReference type="HOGENOM" id="CLU_042582_1_0_4"/>
<dbReference type="Proteomes" id="UP000000535">
    <property type="component" value="Chromosome"/>
</dbReference>
<dbReference type="GO" id="GO:0005829">
    <property type="term" value="C:cytosol"/>
    <property type="evidence" value="ECO:0007669"/>
    <property type="project" value="TreeGrafter"/>
</dbReference>
<dbReference type="GO" id="GO:0005524">
    <property type="term" value="F:ATP binding"/>
    <property type="evidence" value="ECO:0007669"/>
    <property type="project" value="UniProtKB-UniRule"/>
</dbReference>
<dbReference type="GO" id="GO:0005536">
    <property type="term" value="F:D-glucose binding"/>
    <property type="evidence" value="ECO:0007669"/>
    <property type="project" value="InterPro"/>
</dbReference>
<dbReference type="GO" id="GO:0004340">
    <property type="term" value="F:glucokinase activity"/>
    <property type="evidence" value="ECO:0007669"/>
    <property type="project" value="UniProtKB-UniRule"/>
</dbReference>
<dbReference type="GO" id="GO:0006096">
    <property type="term" value="P:glycolytic process"/>
    <property type="evidence" value="ECO:0007669"/>
    <property type="project" value="UniProtKB-UniRule"/>
</dbReference>
<dbReference type="CDD" id="cd24008">
    <property type="entry name" value="ASKHA_NBD_GLK"/>
    <property type="match status" value="1"/>
</dbReference>
<dbReference type="FunFam" id="3.40.367.20:FF:000002">
    <property type="entry name" value="Glucokinase"/>
    <property type="match status" value="1"/>
</dbReference>
<dbReference type="Gene3D" id="3.30.420.40">
    <property type="match status" value="1"/>
</dbReference>
<dbReference type="Gene3D" id="3.40.367.20">
    <property type="match status" value="1"/>
</dbReference>
<dbReference type="HAMAP" id="MF_00524">
    <property type="entry name" value="Glucokinase"/>
    <property type="match status" value="1"/>
</dbReference>
<dbReference type="InterPro" id="IPR043129">
    <property type="entry name" value="ATPase_NBD"/>
</dbReference>
<dbReference type="InterPro" id="IPR050201">
    <property type="entry name" value="Bacterial_glucokinase"/>
</dbReference>
<dbReference type="InterPro" id="IPR003836">
    <property type="entry name" value="Glucokinase"/>
</dbReference>
<dbReference type="NCBIfam" id="TIGR00749">
    <property type="entry name" value="glk"/>
    <property type="match status" value="1"/>
</dbReference>
<dbReference type="NCBIfam" id="NF001416">
    <property type="entry name" value="PRK00292.1-3"/>
    <property type="match status" value="1"/>
</dbReference>
<dbReference type="PANTHER" id="PTHR47690">
    <property type="entry name" value="GLUCOKINASE"/>
    <property type="match status" value="1"/>
</dbReference>
<dbReference type="PANTHER" id="PTHR47690:SF1">
    <property type="entry name" value="GLUCOKINASE"/>
    <property type="match status" value="1"/>
</dbReference>
<dbReference type="Pfam" id="PF02685">
    <property type="entry name" value="Glucokinase"/>
    <property type="match status" value="1"/>
</dbReference>
<dbReference type="SUPFAM" id="SSF53067">
    <property type="entry name" value="Actin-like ATPase domain"/>
    <property type="match status" value="1"/>
</dbReference>
<feature type="chain" id="PRO_0000268778" description="Glucokinase">
    <location>
        <begin position="1"/>
        <end position="328"/>
    </location>
</feature>
<feature type="binding site" evidence="1">
    <location>
        <begin position="16"/>
        <end position="21"/>
    </location>
    <ligand>
        <name>ATP</name>
        <dbReference type="ChEBI" id="CHEBI:30616"/>
    </ligand>
</feature>
<gene>
    <name evidence="1" type="primary">glk</name>
    <name type="ordered locus">NGO_0717</name>
</gene>
<proteinExistence type="inferred from homology"/>
<accession>Q5F8Q0</accession>
<name>GLK_NEIG1</name>
<evidence type="ECO:0000255" key="1">
    <source>
        <dbReference type="HAMAP-Rule" id="MF_00524"/>
    </source>
</evidence>
<sequence>MSSTPNKHADYPRLVADIGGTNARFALETAPCVIEKVAVLPCKEYDTVTDAVRAYLNQSGATGVRHAAFAIANPILGDWVQMTNHHWAFSIETTRQALGLDTLILLNDFTAQALAVTQTSSKDLMQVGGQKPVEFAPKAVIGPGTGLGVSGLVHSPAGWVALAGEGGHTSFPPFDDMEVLIWQYAKNKYRHVSAERFLSGAGLSLIYETLAVKQKAEPAKLMPSEITEKALNCESPLCRQALDIFCAMLGTVASNLALTLGARGGVYLCGGIIPRMLDYFKTSPFRSRFENKGRFEAYLAAIPVYVVLSEFPGIAGAAAALGNHLKNV</sequence>
<protein>
    <recommendedName>
        <fullName evidence="1">Glucokinase</fullName>
        <ecNumber evidence="1">2.7.1.2</ecNumber>
    </recommendedName>
    <alternativeName>
        <fullName evidence="1">Glucose kinase</fullName>
    </alternativeName>
</protein>